<evidence type="ECO:0000255" key="1">
    <source>
        <dbReference type="HAMAP-Rule" id="MF_00222"/>
    </source>
</evidence>
<proteinExistence type="inferred from homology"/>
<gene>
    <name evidence="1" type="primary">aroE</name>
    <name type="ordered locus">EcHS_A3475</name>
</gene>
<feature type="chain" id="PRO_1000058663" description="Shikimate dehydrogenase (NADP(+))">
    <location>
        <begin position="1"/>
        <end position="272"/>
    </location>
</feature>
<feature type="active site" description="Proton acceptor" evidence="1">
    <location>
        <position position="65"/>
    </location>
</feature>
<feature type="binding site" evidence="1">
    <location>
        <begin position="14"/>
        <end position="16"/>
    </location>
    <ligand>
        <name>shikimate</name>
        <dbReference type="ChEBI" id="CHEBI:36208"/>
    </ligand>
</feature>
<feature type="binding site" evidence="1">
    <location>
        <position position="61"/>
    </location>
    <ligand>
        <name>shikimate</name>
        <dbReference type="ChEBI" id="CHEBI:36208"/>
    </ligand>
</feature>
<feature type="binding site" evidence="1">
    <location>
        <position position="77"/>
    </location>
    <ligand>
        <name>NADP(+)</name>
        <dbReference type="ChEBI" id="CHEBI:58349"/>
    </ligand>
</feature>
<feature type="binding site" evidence="1">
    <location>
        <position position="86"/>
    </location>
    <ligand>
        <name>shikimate</name>
        <dbReference type="ChEBI" id="CHEBI:36208"/>
    </ligand>
</feature>
<feature type="binding site" evidence="1">
    <location>
        <position position="102"/>
    </location>
    <ligand>
        <name>shikimate</name>
        <dbReference type="ChEBI" id="CHEBI:36208"/>
    </ligand>
</feature>
<feature type="binding site" evidence="1">
    <location>
        <begin position="126"/>
        <end position="130"/>
    </location>
    <ligand>
        <name>NADP(+)</name>
        <dbReference type="ChEBI" id="CHEBI:58349"/>
    </ligand>
</feature>
<feature type="binding site" evidence="1">
    <location>
        <begin position="149"/>
        <end position="154"/>
    </location>
    <ligand>
        <name>NADP(+)</name>
        <dbReference type="ChEBI" id="CHEBI:58349"/>
    </ligand>
</feature>
<feature type="binding site" evidence="1">
    <location>
        <position position="213"/>
    </location>
    <ligand>
        <name>NADP(+)</name>
        <dbReference type="ChEBI" id="CHEBI:58349"/>
    </ligand>
</feature>
<feature type="binding site" evidence="1">
    <location>
        <position position="215"/>
    </location>
    <ligand>
        <name>shikimate</name>
        <dbReference type="ChEBI" id="CHEBI:36208"/>
    </ligand>
</feature>
<feature type="binding site" evidence="1">
    <location>
        <position position="237"/>
    </location>
    <ligand>
        <name>NADP(+)</name>
        <dbReference type="ChEBI" id="CHEBI:58349"/>
    </ligand>
</feature>
<keyword id="KW-0028">Amino-acid biosynthesis</keyword>
<keyword id="KW-0057">Aromatic amino acid biosynthesis</keyword>
<keyword id="KW-0521">NADP</keyword>
<keyword id="KW-0560">Oxidoreductase</keyword>
<comment type="function">
    <text evidence="1">Involved in the biosynthesis of the chorismate, which leads to the biosynthesis of aromatic amino acids. Catalyzes the reversible NADPH linked reduction of 3-dehydroshikimate (DHSA) to yield shikimate (SA).</text>
</comment>
<comment type="catalytic activity">
    <reaction evidence="1">
        <text>shikimate + NADP(+) = 3-dehydroshikimate + NADPH + H(+)</text>
        <dbReference type="Rhea" id="RHEA:17737"/>
        <dbReference type="ChEBI" id="CHEBI:15378"/>
        <dbReference type="ChEBI" id="CHEBI:16630"/>
        <dbReference type="ChEBI" id="CHEBI:36208"/>
        <dbReference type="ChEBI" id="CHEBI:57783"/>
        <dbReference type="ChEBI" id="CHEBI:58349"/>
        <dbReference type="EC" id="1.1.1.25"/>
    </reaction>
</comment>
<comment type="pathway">
    <text evidence="1">Metabolic intermediate biosynthesis; chorismate biosynthesis; chorismate from D-erythrose 4-phosphate and phosphoenolpyruvate: step 4/7.</text>
</comment>
<comment type="subunit">
    <text evidence="1">Homodimer.</text>
</comment>
<comment type="similarity">
    <text evidence="1">Belongs to the shikimate dehydrogenase family.</text>
</comment>
<dbReference type="EC" id="1.1.1.25" evidence="1"/>
<dbReference type="EMBL" id="CP000802">
    <property type="protein sequence ID" value="ABV07690.1"/>
    <property type="molecule type" value="Genomic_DNA"/>
</dbReference>
<dbReference type="RefSeq" id="WP_000451243.1">
    <property type="nucleotide sequence ID" value="NC_009800.1"/>
</dbReference>
<dbReference type="SMR" id="A8A586"/>
<dbReference type="KEGG" id="ecx:EcHS_A3475"/>
<dbReference type="HOGENOM" id="CLU_044063_2_1_6"/>
<dbReference type="UniPathway" id="UPA00053">
    <property type="reaction ID" value="UER00087"/>
</dbReference>
<dbReference type="GO" id="GO:0005829">
    <property type="term" value="C:cytosol"/>
    <property type="evidence" value="ECO:0007669"/>
    <property type="project" value="TreeGrafter"/>
</dbReference>
<dbReference type="GO" id="GO:0050661">
    <property type="term" value="F:NADP binding"/>
    <property type="evidence" value="ECO:0007669"/>
    <property type="project" value="InterPro"/>
</dbReference>
<dbReference type="GO" id="GO:0004764">
    <property type="term" value="F:shikimate 3-dehydrogenase (NADP+) activity"/>
    <property type="evidence" value="ECO:0007669"/>
    <property type="project" value="UniProtKB-UniRule"/>
</dbReference>
<dbReference type="GO" id="GO:0008652">
    <property type="term" value="P:amino acid biosynthetic process"/>
    <property type="evidence" value="ECO:0007669"/>
    <property type="project" value="UniProtKB-KW"/>
</dbReference>
<dbReference type="GO" id="GO:0009073">
    <property type="term" value="P:aromatic amino acid family biosynthetic process"/>
    <property type="evidence" value="ECO:0007669"/>
    <property type="project" value="UniProtKB-KW"/>
</dbReference>
<dbReference type="GO" id="GO:0009423">
    <property type="term" value="P:chorismate biosynthetic process"/>
    <property type="evidence" value="ECO:0007669"/>
    <property type="project" value="UniProtKB-UniRule"/>
</dbReference>
<dbReference type="GO" id="GO:0019632">
    <property type="term" value="P:shikimate metabolic process"/>
    <property type="evidence" value="ECO:0007669"/>
    <property type="project" value="InterPro"/>
</dbReference>
<dbReference type="CDD" id="cd01065">
    <property type="entry name" value="NAD_bind_Shikimate_DH"/>
    <property type="match status" value="1"/>
</dbReference>
<dbReference type="FunFam" id="3.40.50.10860:FF:000006">
    <property type="entry name" value="Shikimate dehydrogenase (NADP(+))"/>
    <property type="match status" value="1"/>
</dbReference>
<dbReference type="FunFam" id="3.40.50.720:FF:000104">
    <property type="entry name" value="Shikimate dehydrogenase (NADP(+))"/>
    <property type="match status" value="1"/>
</dbReference>
<dbReference type="Gene3D" id="3.40.50.10860">
    <property type="entry name" value="Leucine Dehydrogenase, chain A, domain 1"/>
    <property type="match status" value="1"/>
</dbReference>
<dbReference type="Gene3D" id="3.40.50.720">
    <property type="entry name" value="NAD(P)-binding Rossmann-like Domain"/>
    <property type="match status" value="1"/>
</dbReference>
<dbReference type="HAMAP" id="MF_00222">
    <property type="entry name" value="Shikimate_DH_AroE"/>
    <property type="match status" value="1"/>
</dbReference>
<dbReference type="InterPro" id="IPR046346">
    <property type="entry name" value="Aminoacid_DH-like_N_sf"/>
</dbReference>
<dbReference type="InterPro" id="IPR036291">
    <property type="entry name" value="NAD(P)-bd_dom_sf"/>
</dbReference>
<dbReference type="InterPro" id="IPR041121">
    <property type="entry name" value="SDH_C"/>
</dbReference>
<dbReference type="InterPro" id="IPR011342">
    <property type="entry name" value="Shikimate_DH"/>
</dbReference>
<dbReference type="InterPro" id="IPR013708">
    <property type="entry name" value="Shikimate_DH-bd_N"/>
</dbReference>
<dbReference type="InterPro" id="IPR022893">
    <property type="entry name" value="Shikimate_DH_fam"/>
</dbReference>
<dbReference type="InterPro" id="IPR006151">
    <property type="entry name" value="Shikm_DH/Glu-tRNA_Rdtase"/>
</dbReference>
<dbReference type="NCBIfam" id="TIGR00507">
    <property type="entry name" value="aroE"/>
    <property type="match status" value="1"/>
</dbReference>
<dbReference type="NCBIfam" id="NF001310">
    <property type="entry name" value="PRK00258.1-2"/>
    <property type="match status" value="1"/>
</dbReference>
<dbReference type="PANTHER" id="PTHR21089:SF1">
    <property type="entry name" value="BIFUNCTIONAL 3-DEHYDROQUINATE DEHYDRATASE_SHIKIMATE DEHYDROGENASE, CHLOROPLASTIC"/>
    <property type="match status" value="1"/>
</dbReference>
<dbReference type="PANTHER" id="PTHR21089">
    <property type="entry name" value="SHIKIMATE DEHYDROGENASE"/>
    <property type="match status" value="1"/>
</dbReference>
<dbReference type="Pfam" id="PF18317">
    <property type="entry name" value="SDH_C"/>
    <property type="match status" value="1"/>
</dbReference>
<dbReference type="Pfam" id="PF01488">
    <property type="entry name" value="Shikimate_DH"/>
    <property type="match status" value="1"/>
</dbReference>
<dbReference type="Pfam" id="PF08501">
    <property type="entry name" value="Shikimate_dh_N"/>
    <property type="match status" value="1"/>
</dbReference>
<dbReference type="SUPFAM" id="SSF53223">
    <property type="entry name" value="Aminoacid dehydrogenase-like, N-terminal domain"/>
    <property type="match status" value="1"/>
</dbReference>
<dbReference type="SUPFAM" id="SSF51735">
    <property type="entry name" value="NAD(P)-binding Rossmann-fold domains"/>
    <property type="match status" value="1"/>
</dbReference>
<accession>A8A586</accession>
<protein>
    <recommendedName>
        <fullName evidence="1">Shikimate dehydrogenase (NADP(+))</fullName>
        <shortName evidence="1">SDH</shortName>
        <ecNumber evidence="1">1.1.1.25</ecNumber>
    </recommendedName>
</protein>
<sequence length="272" mass="29414">METYAVFGNPIAHSKSPFIHQQFAQQLNIEHPYGRVLAPINDFINTLNAFFSAGGKGANVTVPFKEEAFARADELTERAALAGAVNTLMRLEDGRLLGDNTDGVGLLSDLERLSFIRPGLRILLIGAGGASRGVLLPLLSLDCAVTITNRTVSRAEELAKLFAHTGSIQALSMDELEGHEFDLIINATSSGISGDIPAIPSSLIHPGIYCYDMFYQKGKTPFLAWCEQRGSKRNADGLGMLVAQAAHAFLLWHGVLPDVEPVIKQLQEELSA</sequence>
<organism>
    <name type="scientific">Escherichia coli O9:H4 (strain HS)</name>
    <dbReference type="NCBI Taxonomy" id="331112"/>
    <lineage>
        <taxon>Bacteria</taxon>
        <taxon>Pseudomonadati</taxon>
        <taxon>Pseudomonadota</taxon>
        <taxon>Gammaproteobacteria</taxon>
        <taxon>Enterobacterales</taxon>
        <taxon>Enterobacteriaceae</taxon>
        <taxon>Escherichia</taxon>
    </lineage>
</organism>
<name>AROE_ECOHS</name>
<reference key="1">
    <citation type="journal article" date="2008" name="J. Bacteriol.">
        <title>The pangenome structure of Escherichia coli: comparative genomic analysis of E. coli commensal and pathogenic isolates.</title>
        <authorList>
            <person name="Rasko D.A."/>
            <person name="Rosovitz M.J."/>
            <person name="Myers G.S.A."/>
            <person name="Mongodin E.F."/>
            <person name="Fricke W.F."/>
            <person name="Gajer P."/>
            <person name="Crabtree J."/>
            <person name="Sebaihia M."/>
            <person name="Thomson N.R."/>
            <person name="Chaudhuri R."/>
            <person name="Henderson I.R."/>
            <person name="Sperandio V."/>
            <person name="Ravel J."/>
        </authorList>
    </citation>
    <scope>NUCLEOTIDE SEQUENCE [LARGE SCALE GENOMIC DNA]</scope>
    <source>
        <strain>HS</strain>
    </source>
</reference>